<feature type="chain" id="PRO_0000129579" description="Large ribosomal subunit protein uL2">
    <location>
        <begin position="1"/>
        <end position="281"/>
    </location>
</feature>
<feature type="region of interest" description="Disordered" evidence="2">
    <location>
        <begin position="223"/>
        <end position="255"/>
    </location>
</feature>
<feature type="sequence conflict" description="In Ref. 1; CAA29707." evidence="3" ref="1">
    <original>K</original>
    <variation>N</variation>
    <location>
        <position position="7"/>
    </location>
</feature>
<feature type="sequence conflict" description="In Ref. 1; CAA29707." evidence="3" ref="1">
    <original>IDYSAVLTTKNT</original>
    <variation>TECSLFNNQKIA</variation>
    <location>
        <begin position="19"/>
        <end position="30"/>
    </location>
</feature>
<feature type="sequence conflict" description="In Ref. 1; CAA29707." evidence="3" ref="1">
    <original>VV</original>
    <variation>GG</variation>
    <location>
        <begin position="36"/>
        <end position="37"/>
    </location>
</feature>
<feature type="sequence conflict" description="In Ref. 1; CAA29707." evidence="3" ref="1">
    <original>K</original>
    <variation>T</variation>
    <location>
        <position position="42"/>
    </location>
</feature>
<feature type="sequence conflict" description="In Ref. 1; CAA29707." evidence="3" ref="1">
    <original>NR</original>
    <variation>KS</variation>
    <location>
        <begin position="47"/>
        <end position="48"/>
    </location>
</feature>
<feature type="sequence conflict" description="In Ref. 1; CAA29707." evidence="3" ref="1">
    <original>TT</original>
    <variation>SS</variation>
    <location>
        <begin position="52"/>
        <end position="53"/>
    </location>
</feature>
<feature type="sequence conflict" description="In Ref. 1; CAA29707." evidence="3" ref="1">
    <original>H</original>
    <variation>Q</variation>
    <location>
        <position position="234"/>
    </location>
</feature>
<comment type="function">
    <text evidence="1">One of the primary rRNA binding proteins. Required for association of the 30S and 50S subunits to form the 70S ribosome, for tRNA binding and peptide bond formation. It has been suggested to have peptidyltransferase activity; this is somewhat controversial. Makes several contacts with the 16S rRNA in the 70S ribosome.</text>
</comment>
<comment type="subunit">
    <text evidence="1">Part of the 50S ribosomal subunit. Forms a bridge to the 30S subunit in the 70S ribosome.</text>
</comment>
<comment type="similarity">
    <text evidence="1">Belongs to the universal ribosomal protein uL2 family.</text>
</comment>
<keyword id="KW-0687">Ribonucleoprotein</keyword>
<keyword id="KW-0689">Ribosomal protein</keyword>
<keyword id="KW-0694">RNA-binding</keyword>
<keyword id="KW-0699">rRNA-binding</keyword>
<reference key="1">
    <citation type="journal article" date="1987" name="Mol. Gen. Genet.">
        <title>The ribosomal protein gene cluster of Mycoplasma capricolum.</title>
        <authorList>
            <person name="Ohkubo S."/>
            <person name="Muto A."/>
            <person name="Kawauchi Y."/>
            <person name="Yamao F."/>
            <person name="Osawa S."/>
        </authorList>
    </citation>
    <scope>NUCLEOTIDE SEQUENCE [GENOMIC DNA]</scope>
</reference>
<reference key="2">
    <citation type="submission" date="2005-09" db="EMBL/GenBank/DDBJ databases">
        <authorList>
            <person name="Glass J.I."/>
            <person name="Lartigue C."/>
            <person name="Pfannkoch C."/>
            <person name="Baden-Tillson H."/>
            <person name="Smith H.O."/>
            <person name="Venter J.C."/>
            <person name="Roske K."/>
            <person name="Wise K.S."/>
            <person name="Calcutt M.J."/>
            <person name="Nelson W.C."/>
            <person name="Nierman W.C."/>
        </authorList>
    </citation>
    <scope>NUCLEOTIDE SEQUENCE [LARGE SCALE GENOMIC DNA]</scope>
    <source>
        <strain>California kid / ATCC 27343 / NCTC 10154</strain>
    </source>
</reference>
<accession>P10133</accession>
<accession>Q2SRF6</accession>
<sequence>MAIKKYKSTTNGRRNMTTIDYSAVLTTKNTPEKSLVVSKSSKAGRNNRGLITTRHKGGGHKQKYRIIDFKRNKRDIFGTISTIEYDPNRNAFICLVNYVDGEKRYILFAKGMQVGMKVVASENADIKVGNSAPLKNIPEGTLLHNVELKPGKGGQIARSAGSSVQLLGKDDDGRYVTLRLSSGEVRKVLSECYATIGEVGNEEYNLVNWGKAGRNRWRGIRPTVRGSVMNPNDHPHGGGEGRAPIGRKSPVTPWGKKALGVKTRNTKKASEKLIVRKRSKK</sequence>
<gene>
    <name evidence="1" type="primary">rplB</name>
    <name type="ordered locus">MCAP_0693</name>
</gene>
<evidence type="ECO:0000255" key="1">
    <source>
        <dbReference type="HAMAP-Rule" id="MF_01320"/>
    </source>
</evidence>
<evidence type="ECO:0000256" key="2">
    <source>
        <dbReference type="SAM" id="MobiDB-lite"/>
    </source>
</evidence>
<evidence type="ECO:0000305" key="3"/>
<dbReference type="EMBL" id="X06414">
    <property type="protein sequence ID" value="CAA29707.1"/>
    <property type="molecule type" value="Genomic_DNA"/>
</dbReference>
<dbReference type="EMBL" id="CP000123">
    <property type="protein sequence ID" value="ABC01190.1"/>
    <property type="molecule type" value="Genomic_DNA"/>
</dbReference>
<dbReference type="PIR" id="S02834">
    <property type="entry name" value="R5YM2C"/>
</dbReference>
<dbReference type="RefSeq" id="WP_011387542.1">
    <property type="nucleotide sequence ID" value="NC_007633.1"/>
</dbReference>
<dbReference type="SMR" id="P10133"/>
<dbReference type="GeneID" id="23778353"/>
<dbReference type="KEGG" id="mcp:MCAP_0693"/>
<dbReference type="HOGENOM" id="CLU_036235_2_1_14"/>
<dbReference type="PhylomeDB" id="P10133"/>
<dbReference type="Proteomes" id="UP000001928">
    <property type="component" value="Chromosome"/>
</dbReference>
<dbReference type="GO" id="GO:0015934">
    <property type="term" value="C:large ribosomal subunit"/>
    <property type="evidence" value="ECO:0007669"/>
    <property type="project" value="InterPro"/>
</dbReference>
<dbReference type="GO" id="GO:0019843">
    <property type="term" value="F:rRNA binding"/>
    <property type="evidence" value="ECO:0007669"/>
    <property type="project" value="UniProtKB-UniRule"/>
</dbReference>
<dbReference type="GO" id="GO:0003735">
    <property type="term" value="F:structural constituent of ribosome"/>
    <property type="evidence" value="ECO:0007669"/>
    <property type="project" value="InterPro"/>
</dbReference>
<dbReference type="GO" id="GO:0016740">
    <property type="term" value="F:transferase activity"/>
    <property type="evidence" value="ECO:0007669"/>
    <property type="project" value="InterPro"/>
</dbReference>
<dbReference type="GO" id="GO:0002181">
    <property type="term" value="P:cytoplasmic translation"/>
    <property type="evidence" value="ECO:0007669"/>
    <property type="project" value="TreeGrafter"/>
</dbReference>
<dbReference type="FunFam" id="2.30.30.30:FF:000001">
    <property type="entry name" value="50S ribosomal protein L2"/>
    <property type="match status" value="1"/>
</dbReference>
<dbReference type="FunFam" id="2.40.50.140:FF:000003">
    <property type="entry name" value="50S ribosomal protein L2"/>
    <property type="match status" value="1"/>
</dbReference>
<dbReference type="FunFam" id="4.10.950.10:FF:000001">
    <property type="entry name" value="50S ribosomal protein L2"/>
    <property type="match status" value="1"/>
</dbReference>
<dbReference type="Gene3D" id="2.30.30.30">
    <property type="match status" value="1"/>
</dbReference>
<dbReference type="Gene3D" id="2.40.50.140">
    <property type="entry name" value="Nucleic acid-binding proteins"/>
    <property type="match status" value="1"/>
</dbReference>
<dbReference type="Gene3D" id="4.10.950.10">
    <property type="entry name" value="Ribosomal protein L2, domain 3"/>
    <property type="match status" value="1"/>
</dbReference>
<dbReference type="HAMAP" id="MF_01320_B">
    <property type="entry name" value="Ribosomal_uL2_B"/>
    <property type="match status" value="1"/>
</dbReference>
<dbReference type="InterPro" id="IPR012340">
    <property type="entry name" value="NA-bd_OB-fold"/>
</dbReference>
<dbReference type="InterPro" id="IPR014722">
    <property type="entry name" value="Rib_uL2_dom2"/>
</dbReference>
<dbReference type="InterPro" id="IPR002171">
    <property type="entry name" value="Ribosomal_uL2"/>
</dbReference>
<dbReference type="InterPro" id="IPR005880">
    <property type="entry name" value="Ribosomal_uL2_bac/org-type"/>
</dbReference>
<dbReference type="InterPro" id="IPR022669">
    <property type="entry name" value="Ribosomal_uL2_C"/>
</dbReference>
<dbReference type="InterPro" id="IPR022671">
    <property type="entry name" value="Ribosomal_uL2_CS"/>
</dbReference>
<dbReference type="InterPro" id="IPR014726">
    <property type="entry name" value="Ribosomal_uL2_dom3"/>
</dbReference>
<dbReference type="InterPro" id="IPR022666">
    <property type="entry name" value="Ribosomal_uL2_RNA-bd_dom"/>
</dbReference>
<dbReference type="InterPro" id="IPR008991">
    <property type="entry name" value="Translation_prot_SH3-like_sf"/>
</dbReference>
<dbReference type="NCBIfam" id="TIGR01171">
    <property type="entry name" value="rplB_bact"/>
    <property type="match status" value="1"/>
</dbReference>
<dbReference type="PANTHER" id="PTHR13691:SF5">
    <property type="entry name" value="LARGE RIBOSOMAL SUBUNIT PROTEIN UL2M"/>
    <property type="match status" value="1"/>
</dbReference>
<dbReference type="PANTHER" id="PTHR13691">
    <property type="entry name" value="RIBOSOMAL PROTEIN L2"/>
    <property type="match status" value="1"/>
</dbReference>
<dbReference type="Pfam" id="PF00181">
    <property type="entry name" value="Ribosomal_L2"/>
    <property type="match status" value="1"/>
</dbReference>
<dbReference type="Pfam" id="PF03947">
    <property type="entry name" value="Ribosomal_L2_C"/>
    <property type="match status" value="1"/>
</dbReference>
<dbReference type="PIRSF" id="PIRSF002158">
    <property type="entry name" value="Ribosomal_L2"/>
    <property type="match status" value="1"/>
</dbReference>
<dbReference type="SMART" id="SM01383">
    <property type="entry name" value="Ribosomal_L2"/>
    <property type="match status" value="1"/>
</dbReference>
<dbReference type="SMART" id="SM01382">
    <property type="entry name" value="Ribosomal_L2_C"/>
    <property type="match status" value="1"/>
</dbReference>
<dbReference type="SUPFAM" id="SSF50249">
    <property type="entry name" value="Nucleic acid-binding proteins"/>
    <property type="match status" value="1"/>
</dbReference>
<dbReference type="SUPFAM" id="SSF50104">
    <property type="entry name" value="Translation proteins SH3-like domain"/>
    <property type="match status" value="1"/>
</dbReference>
<dbReference type="PROSITE" id="PS00467">
    <property type="entry name" value="RIBOSOMAL_L2"/>
    <property type="match status" value="1"/>
</dbReference>
<proteinExistence type="inferred from homology"/>
<protein>
    <recommendedName>
        <fullName evidence="1">Large ribosomal subunit protein uL2</fullName>
    </recommendedName>
    <alternativeName>
        <fullName evidence="3">50S ribosomal protein L2</fullName>
    </alternativeName>
</protein>
<name>RL2_MYCCT</name>
<organism>
    <name type="scientific">Mycoplasma capricolum subsp. capricolum (strain California kid / ATCC 27343 / NCTC 10154)</name>
    <dbReference type="NCBI Taxonomy" id="340047"/>
    <lineage>
        <taxon>Bacteria</taxon>
        <taxon>Bacillati</taxon>
        <taxon>Mycoplasmatota</taxon>
        <taxon>Mollicutes</taxon>
        <taxon>Mycoplasmataceae</taxon>
        <taxon>Mycoplasma</taxon>
    </lineage>
</organism>